<name>ATPF2_PROM2</name>
<reference key="1">
    <citation type="journal article" date="2007" name="PLoS Genet.">
        <title>Patterns and implications of gene gain and loss in the evolution of Prochlorococcus.</title>
        <authorList>
            <person name="Kettler G.C."/>
            <person name="Martiny A.C."/>
            <person name="Huang K."/>
            <person name="Zucker J."/>
            <person name="Coleman M.L."/>
            <person name="Rodrigue S."/>
            <person name="Chen F."/>
            <person name="Lapidus A."/>
            <person name="Ferriera S."/>
            <person name="Johnson J."/>
            <person name="Steglich C."/>
            <person name="Church G.M."/>
            <person name="Richardson P."/>
            <person name="Chisholm S.W."/>
        </authorList>
    </citation>
    <scope>NUCLEOTIDE SEQUENCE [LARGE SCALE GENOMIC DNA]</scope>
    <source>
        <strain>MIT 9215</strain>
    </source>
</reference>
<feature type="chain" id="PRO_0000369023" description="ATP synthase subunit b'">
    <location>
        <begin position="1"/>
        <end position="153"/>
    </location>
</feature>
<feature type="transmembrane region" description="Helical" evidence="1">
    <location>
        <begin position="23"/>
        <end position="40"/>
    </location>
</feature>
<protein>
    <recommendedName>
        <fullName evidence="1">ATP synthase subunit b'</fullName>
    </recommendedName>
    <alternativeName>
        <fullName evidence="1">ATP synthase F(0) sector subunit b'</fullName>
    </alternativeName>
    <alternativeName>
        <fullName evidence="1">ATPase subunit II</fullName>
    </alternativeName>
    <alternativeName>
        <fullName evidence="1">F-type ATPase subunit b'</fullName>
        <shortName evidence="1">F-ATPase subunit b'</shortName>
    </alternativeName>
</protein>
<dbReference type="EMBL" id="CP000825">
    <property type="protein sequence ID" value="ABV51335.1"/>
    <property type="molecule type" value="Genomic_DNA"/>
</dbReference>
<dbReference type="RefSeq" id="WP_012008356.1">
    <property type="nucleotide sequence ID" value="NC_009840.1"/>
</dbReference>
<dbReference type="SMR" id="A8G6V4"/>
<dbReference type="STRING" id="93060.P9215_17221"/>
<dbReference type="KEGG" id="pmh:P9215_17221"/>
<dbReference type="eggNOG" id="COG0711">
    <property type="taxonomic scope" value="Bacteria"/>
</dbReference>
<dbReference type="HOGENOM" id="CLU_079215_9_0_3"/>
<dbReference type="OrthoDB" id="426571at2"/>
<dbReference type="Proteomes" id="UP000002014">
    <property type="component" value="Chromosome"/>
</dbReference>
<dbReference type="GO" id="GO:0031676">
    <property type="term" value="C:plasma membrane-derived thylakoid membrane"/>
    <property type="evidence" value="ECO:0007669"/>
    <property type="project" value="UniProtKB-SubCell"/>
</dbReference>
<dbReference type="GO" id="GO:0045259">
    <property type="term" value="C:proton-transporting ATP synthase complex"/>
    <property type="evidence" value="ECO:0007669"/>
    <property type="project" value="UniProtKB-KW"/>
</dbReference>
<dbReference type="GO" id="GO:0046933">
    <property type="term" value="F:proton-transporting ATP synthase activity, rotational mechanism"/>
    <property type="evidence" value="ECO:0007669"/>
    <property type="project" value="UniProtKB-UniRule"/>
</dbReference>
<dbReference type="GO" id="GO:0046961">
    <property type="term" value="F:proton-transporting ATPase activity, rotational mechanism"/>
    <property type="evidence" value="ECO:0007669"/>
    <property type="project" value="TreeGrafter"/>
</dbReference>
<dbReference type="CDD" id="cd06503">
    <property type="entry name" value="ATP-synt_Fo_b"/>
    <property type="match status" value="1"/>
</dbReference>
<dbReference type="Gene3D" id="1.20.5.620">
    <property type="entry name" value="F1F0 ATP synthase subunit B, membrane domain"/>
    <property type="match status" value="1"/>
</dbReference>
<dbReference type="HAMAP" id="MF_01398">
    <property type="entry name" value="ATP_synth_b_bprime"/>
    <property type="match status" value="1"/>
</dbReference>
<dbReference type="HAMAP" id="MF_01399">
    <property type="entry name" value="ATP_synth_bprime"/>
    <property type="match status" value="1"/>
</dbReference>
<dbReference type="InterPro" id="IPR034679">
    <property type="entry name" value="ATP_synth_b"/>
</dbReference>
<dbReference type="InterPro" id="IPR028987">
    <property type="entry name" value="ATP_synth_B-like_membr_sf"/>
</dbReference>
<dbReference type="InterPro" id="IPR002146">
    <property type="entry name" value="ATP_synth_b/b'su_bac/chlpt"/>
</dbReference>
<dbReference type="InterPro" id="IPR050059">
    <property type="entry name" value="ATP_synthase_B_chain"/>
</dbReference>
<dbReference type="NCBIfam" id="NF005607">
    <property type="entry name" value="PRK07353.1"/>
    <property type="match status" value="1"/>
</dbReference>
<dbReference type="PANTHER" id="PTHR33445">
    <property type="entry name" value="ATP SYNTHASE SUBUNIT B', CHLOROPLASTIC"/>
    <property type="match status" value="1"/>
</dbReference>
<dbReference type="PANTHER" id="PTHR33445:SF2">
    <property type="entry name" value="ATP SYNTHASE SUBUNIT B', CHLOROPLASTIC"/>
    <property type="match status" value="1"/>
</dbReference>
<dbReference type="Pfam" id="PF00430">
    <property type="entry name" value="ATP-synt_B"/>
    <property type="match status" value="1"/>
</dbReference>
<dbReference type="SUPFAM" id="SSF81573">
    <property type="entry name" value="F1F0 ATP synthase subunit B, membrane domain"/>
    <property type="match status" value="1"/>
</dbReference>
<evidence type="ECO:0000255" key="1">
    <source>
        <dbReference type="HAMAP-Rule" id="MF_01399"/>
    </source>
</evidence>
<keyword id="KW-0066">ATP synthesis</keyword>
<keyword id="KW-0138">CF(0)</keyword>
<keyword id="KW-0375">Hydrogen ion transport</keyword>
<keyword id="KW-0406">Ion transport</keyword>
<keyword id="KW-0472">Membrane</keyword>
<keyword id="KW-0793">Thylakoid</keyword>
<keyword id="KW-0812">Transmembrane</keyword>
<keyword id="KW-1133">Transmembrane helix</keyword>
<keyword id="KW-0813">Transport</keyword>
<sequence>MLAFNFFGATEGGLFDINATLPLMAIQVVALTYILNSLFFKPVGKVVEKREKFVSDNIIEAKNKLSEVEKLEADLLTQLQSARTEAQRIVSEAENESDKLYKEALELANNEANASKEKARLEIESQTSAARDQLSKQADDLSELIVNRLILEK</sequence>
<comment type="function">
    <text evidence="1">F(1)F(0) ATP synthase produces ATP from ADP in the presence of a proton or sodium gradient. F-type ATPases consist of two structural domains, F(1) containing the extramembraneous catalytic core and F(0) containing the membrane proton channel, linked together by a central stalk and a peripheral stalk. During catalysis, ATP synthesis in the catalytic domain of F(1) is coupled via a rotary mechanism of the central stalk subunits to proton translocation.</text>
</comment>
<comment type="function">
    <text evidence="1">Component of the F(0) channel, it forms part of the peripheral stalk, linking F(1) to F(0). The b'-subunit is a diverged and duplicated form of b found in plants and photosynthetic bacteria.</text>
</comment>
<comment type="subunit">
    <text evidence="1">F-type ATPases have 2 components, F(1) - the catalytic core - and F(0) - the membrane proton channel. F(1) has five subunits: alpha(3), beta(3), gamma(1), delta(1), epsilon(1). F(0) has four main subunits: a(1), b(1), b'(1) and c(10-14). The alpha and beta chains form an alternating ring which encloses part of the gamma chain. F(1) is attached to F(0) by a central stalk formed by the gamma and epsilon chains, while a peripheral stalk is formed by the delta, b and b' chains.</text>
</comment>
<comment type="subcellular location">
    <subcellularLocation>
        <location evidence="1">Cellular thylakoid membrane</location>
        <topology evidence="1">Single-pass membrane protein</topology>
    </subcellularLocation>
</comment>
<comment type="similarity">
    <text evidence="1">Belongs to the ATPase B chain family.</text>
</comment>
<accession>A8G6V4</accession>
<organism>
    <name type="scientific">Prochlorococcus marinus (strain MIT 9215)</name>
    <dbReference type="NCBI Taxonomy" id="93060"/>
    <lineage>
        <taxon>Bacteria</taxon>
        <taxon>Bacillati</taxon>
        <taxon>Cyanobacteriota</taxon>
        <taxon>Cyanophyceae</taxon>
        <taxon>Synechococcales</taxon>
        <taxon>Prochlorococcaceae</taxon>
        <taxon>Prochlorococcus</taxon>
    </lineage>
</organism>
<proteinExistence type="inferred from homology"/>
<gene>
    <name evidence="1" type="primary">atpF2</name>
    <name evidence="1" type="synonym">atpG</name>
    <name type="ordered locus">P9215_17221</name>
</gene>